<reference key="1">
    <citation type="journal article" date="2009" name="Proc. Natl. Acad. Sci. U.S.A.">
        <title>Biogeography of the Sulfolobus islandicus pan-genome.</title>
        <authorList>
            <person name="Reno M.L."/>
            <person name="Held N.L."/>
            <person name="Fields C.J."/>
            <person name="Burke P.V."/>
            <person name="Whitaker R.J."/>
        </authorList>
    </citation>
    <scope>NUCLEOTIDE SEQUENCE [LARGE SCALE GENOMIC DNA]</scope>
    <source>
        <strain>L.S.2.15 / Lassen #1</strain>
    </source>
</reference>
<protein>
    <recommendedName>
        <fullName evidence="1">Translation initiation factor 2 subunit beta</fullName>
    </recommendedName>
    <alternativeName>
        <fullName evidence="1">aIF2-beta</fullName>
    </alternativeName>
    <alternativeName>
        <fullName evidence="1">eIF-2-beta</fullName>
    </alternativeName>
</protein>
<evidence type="ECO:0000255" key="1">
    <source>
        <dbReference type="HAMAP-Rule" id="MF_00232"/>
    </source>
</evidence>
<proteinExistence type="inferred from homology"/>
<accession>C3MK63</accession>
<name>IF2B_SACI2</name>
<organism>
    <name type="scientific">Saccharolobus islandicus (strain L.S.2.15 / Lassen #1)</name>
    <name type="common">Sulfolobus islandicus</name>
    <dbReference type="NCBI Taxonomy" id="429572"/>
    <lineage>
        <taxon>Archaea</taxon>
        <taxon>Thermoproteota</taxon>
        <taxon>Thermoprotei</taxon>
        <taxon>Sulfolobales</taxon>
        <taxon>Sulfolobaceae</taxon>
        <taxon>Saccharolobus</taxon>
    </lineage>
</organism>
<sequence length="139" mass="15938">MSSEKEYVEMLDRLYSKLPEKGRKEGTQALPNLIIFNIGNTTMIRNFAEYCDRIRREDKICMKYLLKELAAPGNVDDKGELIIQGKFSSQVINTLMERFLKAYVECSTCKSLDTVLKKEKKSWYIVCLACGAQTPVKPL</sequence>
<dbReference type="EMBL" id="CP001399">
    <property type="protein sequence ID" value="ACP34361.1"/>
    <property type="molecule type" value="Genomic_DNA"/>
</dbReference>
<dbReference type="SMR" id="C3MK63"/>
<dbReference type="KEGG" id="sis:LS215_0206"/>
<dbReference type="HOGENOM" id="CLU_026663_3_1_2"/>
<dbReference type="OrthoDB" id="38099at2157"/>
<dbReference type="Proteomes" id="UP000001747">
    <property type="component" value="Chromosome"/>
</dbReference>
<dbReference type="GO" id="GO:0003743">
    <property type="term" value="F:translation initiation factor activity"/>
    <property type="evidence" value="ECO:0007669"/>
    <property type="project" value="UniProtKB-UniRule"/>
</dbReference>
<dbReference type="FunFam" id="3.30.30.170:FF:000001">
    <property type="entry name" value="Eukaryotic translation initiation factor 2 subunit"/>
    <property type="match status" value="1"/>
</dbReference>
<dbReference type="Gene3D" id="3.30.30.170">
    <property type="match status" value="1"/>
</dbReference>
<dbReference type="HAMAP" id="MF_00232">
    <property type="entry name" value="eIF_2_beta"/>
    <property type="match status" value="1"/>
</dbReference>
<dbReference type="InterPro" id="IPR045196">
    <property type="entry name" value="IF2/IF5"/>
</dbReference>
<dbReference type="InterPro" id="IPR004458">
    <property type="entry name" value="TIF2_bsu_arc"/>
</dbReference>
<dbReference type="InterPro" id="IPR002735">
    <property type="entry name" value="Transl_init_fac_IF2/IF5_dom"/>
</dbReference>
<dbReference type="InterPro" id="IPR016189">
    <property type="entry name" value="Transl_init_fac_IF2/IF5_N"/>
</dbReference>
<dbReference type="InterPro" id="IPR016190">
    <property type="entry name" value="Transl_init_fac_IF2/IF5_Zn-bd"/>
</dbReference>
<dbReference type="NCBIfam" id="NF003067">
    <property type="entry name" value="PRK03988.1"/>
    <property type="match status" value="1"/>
</dbReference>
<dbReference type="PANTHER" id="PTHR23001">
    <property type="entry name" value="EUKARYOTIC TRANSLATION INITIATION FACTOR"/>
    <property type="match status" value="1"/>
</dbReference>
<dbReference type="PANTHER" id="PTHR23001:SF3">
    <property type="entry name" value="EUKARYOTIC TRANSLATION INITIATION FACTOR 2 SUBUNIT 2"/>
    <property type="match status" value="1"/>
</dbReference>
<dbReference type="Pfam" id="PF01873">
    <property type="entry name" value="eIF-5_eIF-2B"/>
    <property type="match status" value="1"/>
</dbReference>
<dbReference type="SMART" id="SM00653">
    <property type="entry name" value="eIF2B_5"/>
    <property type="match status" value="1"/>
</dbReference>
<dbReference type="SUPFAM" id="SSF100966">
    <property type="entry name" value="Translation initiation factor 2 beta, aIF2beta, N-terminal domain"/>
    <property type="match status" value="1"/>
</dbReference>
<dbReference type="SUPFAM" id="SSF75689">
    <property type="entry name" value="Zinc-binding domain of translation initiation factor 2 beta"/>
    <property type="match status" value="1"/>
</dbReference>
<comment type="function">
    <text evidence="1">eIF-2 functions in the early steps of protein synthesis by forming a ternary complex with GTP and initiator tRNA.</text>
</comment>
<comment type="subunit">
    <text evidence="1">Heterotrimer composed of an alpha, a beta and a gamma chain.</text>
</comment>
<comment type="similarity">
    <text evidence="1">Belongs to the eIF-2-beta/eIF-5 family.</text>
</comment>
<gene>
    <name evidence="1" type="primary">eif2b</name>
    <name type="ordered locus">LS215_0206</name>
</gene>
<keyword id="KW-0396">Initiation factor</keyword>
<keyword id="KW-0648">Protein biosynthesis</keyword>
<feature type="chain" id="PRO_1000204379" description="Translation initiation factor 2 subunit beta">
    <location>
        <begin position="1"/>
        <end position="139"/>
    </location>
</feature>